<reference key="1">
    <citation type="journal article" date="2006" name="Nature">
        <title>The finished DNA sequence of human chromosome 12.</title>
        <authorList>
            <person name="Scherer S.E."/>
            <person name="Muzny D.M."/>
            <person name="Buhay C.J."/>
            <person name="Chen R."/>
            <person name="Cree A."/>
            <person name="Ding Y."/>
            <person name="Dugan-Rocha S."/>
            <person name="Gill R."/>
            <person name="Gunaratne P."/>
            <person name="Harris R.A."/>
            <person name="Hawes A.C."/>
            <person name="Hernandez J."/>
            <person name="Hodgson A.V."/>
            <person name="Hume J."/>
            <person name="Jackson A."/>
            <person name="Khan Z.M."/>
            <person name="Kovar-Smith C."/>
            <person name="Lewis L.R."/>
            <person name="Lozado R.J."/>
            <person name="Metzker M.L."/>
            <person name="Milosavljevic A."/>
            <person name="Miner G.R."/>
            <person name="Montgomery K.T."/>
            <person name="Morgan M.B."/>
            <person name="Nazareth L.V."/>
            <person name="Scott G."/>
            <person name="Sodergren E."/>
            <person name="Song X.-Z."/>
            <person name="Steffen D."/>
            <person name="Lovering R.C."/>
            <person name="Wheeler D.A."/>
            <person name="Worley K.C."/>
            <person name="Yuan Y."/>
            <person name="Zhang Z."/>
            <person name="Adams C.Q."/>
            <person name="Ansari-Lari M.A."/>
            <person name="Ayele M."/>
            <person name="Brown M.J."/>
            <person name="Chen G."/>
            <person name="Chen Z."/>
            <person name="Clerc-Blankenburg K.P."/>
            <person name="Davis C."/>
            <person name="Delgado O."/>
            <person name="Dinh H.H."/>
            <person name="Draper H."/>
            <person name="Gonzalez-Garay M.L."/>
            <person name="Havlak P."/>
            <person name="Jackson L.R."/>
            <person name="Jacob L.S."/>
            <person name="Kelly S.H."/>
            <person name="Li L."/>
            <person name="Li Z."/>
            <person name="Liu J."/>
            <person name="Liu W."/>
            <person name="Lu J."/>
            <person name="Maheshwari M."/>
            <person name="Nguyen B.-V."/>
            <person name="Okwuonu G.O."/>
            <person name="Pasternak S."/>
            <person name="Perez L.M."/>
            <person name="Plopper F.J.H."/>
            <person name="Santibanez J."/>
            <person name="Shen H."/>
            <person name="Tabor P.E."/>
            <person name="Verduzco D."/>
            <person name="Waldron L."/>
            <person name="Wang Q."/>
            <person name="Williams G.A."/>
            <person name="Zhang J."/>
            <person name="Zhou J."/>
            <person name="Allen C.C."/>
            <person name="Amin A.G."/>
            <person name="Anyalebechi V."/>
            <person name="Bailey M."/>
            <person name="Barbaria J.A."/>
            <person name="Bimage K.E."/>
            <person name="Bryant N.P."/>
            <person name="Burch P.E."/>
            <person name="Burkett C.E."/>
            <person name="Burrell K.L."/>
            <person name="Calderon E."/>
            <person name="Cardenas V."/>
            <person name="Carter K."/>
            <person name="Casias K."/>
            <person name="Cavazos I."/>
            <person name="Cavazos S.R."/>
            <person name="Ceasar H."/>
            <person name="Chacko J."/>
            <person name="Chan S.N."/>
            <person name="Chavez D."/>
            <person name="Christopoulos C."/>
            <person name="Chu J."/>
            <person name="Cockrell R."/>
            <person name="Cox C.D."/>
            <person name="Dang M."/>
            <person name="Dathorne S.R."/>
            <person name="David R."/>
            <person name="Davis C.M."/>
            <person name="Davy-Carroll L."/>
            <person name="Deshazo D.R."/>
            <person name="Donlin J.E."/>
            <person name="D'Souza L."/>
            <person name="Eaves K.A."/>
            <person name="Egan A."/>
            <person name="Emery-Cohen A.J."/>
            <person name="Escotto M."/>
            <person name="Flagg N."/>
            <person name="Forbes L.D."/>
            <person name="Gabisi A.M."/>
            <person name="Garza M."/>
            <person name="Hamilton C."/>
            <person name="Henderson N."/>
            <person name="Hernandez O."/>
            <person name="Hines S."/>
            <person name="Hogues M.E."/>
            <person name="Huang M."/>
            <person name="Idlebird D.G."/>
            <person name="Johnson R."/>
            <person name="Jolivet A."/>
            <person name="Jones S."/>
            <person name="Kagan R."/>
            <person name="King L.M."/>
            <person name="Leal B."/>
            <person name="Lebow H."/>
            <person name="Lee S."/>
            <person name="LeVan J.M."/>
            <person name="Lewis L.C."/>
            <person name="London P."/>
            <person name="Lorensuhewa L.M."/>
            <person name="Loulseged H."/>
            <person name="Lovett D.A."/>
            <person name="Lucier A."/>
            <person name="Lucier R.L."/>
            <person name="Ma J."/>
            <person name="Madu R.C."/>
            <person name="Mapua P."/>
            <person name="Martindale A.D."/>
            <person name="Martinez E."/>
            <person name="Massey E."/>
            <person name="Mawhiney S."/>
            <person name="Meador M.G."/>
            <person name="Mendez S."/>
            <person name="Mercado C."/>
            <person name="Mercado I.C."/>
            <person name="Merritt C.E."/>
            <person name="Miner Z.L."/>
            <person name="Minja E."/>
            <person name="Mitchell T."/>
            <person name="Mohabbat F."/>
            <person name="Mohabbat K."/>
            <person name="Montgomery B."/>
            <person name="Moore N."/>
            <person name="Morris S."/>
            <person name="Munidasa M."/>
            <person name="Ngo R.N."/>
            <person name="Nguyen N.B."/>
            <person name="Nickerson E."/>
            <person name="Nwaokelemeh O.O."/>
            <person name="Nwokenkwo S."/>
            <person name="Obregon M."/>
            <person name="Oguh M."/>
            <person name="Oragunye N."/>
            <person name="Oviedo R.J."/>
            <person name="Parish B.J."/>
            <person name="Parker D.N."/>
            <person name="Parrish J."/>
            <person name="Parks K.L."/>
            <person name="Paul H.A."/>
            <person name="Payton B.A."/>
            <person name="Perez A."/>
            <person name="Perrin W."/>
            <person name="Pickens A."/>
            <person name="Primus E.L."/>
            <person name="Pu L.-L."/>
            <person name="Puazo M."/>
            <person name="Quiles M.M."/>
            <person name="Quiroz J.B."/>
            <person name="Rabata D."/>
            <person name="Reeves K."/>
            <person name="Ruiz S.J."/>
            <person name="Shao H."/>
            <person name="Sisson I."/>
            <person name="Sonaike T."/>
            <person name="Sorelle R.P."/>
            <person name="Sutton A.E."/>
            <person name="Svatek A.F."/>
            <person name="Svetz L.A."/>
            <person name="Tamerisa K.S."/>
            <person name="Taylor T.R."/>
            <person name="Teague B."/>
            <person name="Thomas N."/>
            <person name="Thorn R.D."/>
            <person name="Trejos Z.Y."/>
            <person name="Trevino B.K."/>
            <person name="Ukegbu O.N."/>
            <person name="Urban J.B."/>
            <person name="Vasquez L.I."/>
            <person name="Vera V.A."/>
            <person name="Villasana D.M."/>
            <person name="Wang L."/>
            <person name="Ward-Moore S."/>
            <person name="Warren J.T."/>
            <person name="Wei X."/>
            <person name="White F."/>
            <person name="Williamson A.L."/>
            <person name="Wleczyk R."/>
            <person name="Wooden H.S."/>
            <person name="Wooden S.H."/>
            <person name="Yen J."/>
            <person name="Yoon L."/>
            <person name="Yoon V."/>
            <person name="Zorrilla S.E."/>
            <person name="Nelson D."/>
            <person name="Kucherlapati R."/>
            <person name="Weinstock G."/>
            <person name="Gibbs R.A."/>
        </authorList>
    </citation>
    <scope>NUCLEOTIDE SEQUENCE [LARGE SCALE GENOMIC DNA]</scope>
</reference>
<dbReference type="EMBL" id="AC025259">
    <property type="status" value="NOT_ANNOTATED_CDS"/>
    <property type="molecule type" value="Genomic_DNA"/>
</dbReference>
<dbReference type="EMBL" id="AC078864">
    <property type="status" value="NOT_ANNOTATED_CDS"/>
    <property type="molecule type" value="Genomic_DNA"/>
</dbReference>
<dbReference type="RefSeq" id="NP_001356145.1">
    <property type="nucleotide sequence ID" value="NM_001369216.1"/>
</dbReference>
<dbReference type="SMR" id="A0A2R8YCJ5"/>
<dbReference type="STRING" id="9606.ENSP00000493663"/>
<dbReference type="Ensembl" id="ENST00000546390.2">
    <property type="protein sequence ID" value="ENSP00000493663.2"/>
    <property type="gene ID" value="ENSG00000284791.2"/>
</dbReference>
<dbReference type="GeneID" id="113523638"/>
<dbReference type="MANE-Select" id="ENST00000546390.2">
    <property type="protein sequence ID" value="ENSP00000493663.2"/>
    <property type="RefSeq nucleotide sequence ID" value="NM_001369216.1"/>
    <property type="RefSeq protein sequence ID" value="NP_001356145.1"/>
</dbReference>
<dbReference type="AGR" id="HGNC:54075"/>
<dbReference type="GeneCards" id="SMIM41"/>
<dbReference type="HGNC" id="HGNC:54075">
    <property type="gene designation" value="SMIM41"/>
</dbReference>
<dbReference type="HPA" id="ENSG00000284791">
    <property type="expression patterns" value="Tissue enhanced (lung, ovary)"/>
</dbReference>
<dbReference type="neXtProt" id="NX_A0A2R8YCJ5"/>
<dbReference type="VEuPathDB" id="HostDB:ENSG00000284791"/>
<dbReference type="InParanoid" id="A0A2R8YCJ5"/>
<dbReference type="OMA" id="CCNQSGA"/>
<dbReference type="PAN-GO" id="A0A2R8YCJ5">
    <property type="GO annotations" value="0 GO annotations based on evolutionary models"/>
</dbReference>
<dbReference type="PRO" id="PR:A0A2R8YCJ5"/>
<dbReference type="Proteomes" id="UP000005640">
    <property type="component" value="Chromosome 12"/>
</dbReference>
<dbReference type="Bgee" id="ENSG00000284791">
    <property type="expression patterns" value="Expressed in right lung and 67 other cell types or tissues"/>
</dbReference>
<dbReference type="GO" id="GO:0016020">
    <property type="term" value="C:membrane"/>
    <property type="evidence" value="ECO:0007669"/>
    <property type="project" value="UniProtKB-SubCell"/>
</dbReference>
<dbReference type="InterPro" id="IPR043383">
    <property type="entry name" value="Reprimo_fam"/>
</dbReference>
<dbReference type="PANTHER" id="PTHR28649">
    <property type="entry name" value="PROTEIN REPRIMO-RELATED"/>
    <property type="match status" value="1"/>
</dbReference>
<dbReference type="PANTHER" id="PTHR28649:SF1">
    <property type="entry name" value="SMALL INTEGRAL MEMBRANE PROTEIN 41"/>
    <property type="match status" value="1"/>
</dbReference>
<evidence type="ECO:0000255" key="1"/>
<evidence type="ECO:0000256" key="2">
    <source>
        <dbReference type="SAM" id="MobiDB-lite"/>
    </source>
</evidence>
<evidence type="ECO:0000312" key="3">
    <source>
        <dbReference type="HGNC" id="HGNC:54075"/>
    </source>
</evidence>
<proteinExistence type="evidence at protein level"/>
<name>SIM41_HUMAN</name>
<keyword id="KW-0472">Membrane</keyword>
<keyword id="KW-1267">Proteomics identification</keyword>
<keyword id="KW-1185">Reference proteome</keyword>
<keyword id="KW-0812">Transmembrane</keyword>
<keyword id="KW-1133">Transmembrane helix</keyword>
<organism>
    <name type="scientific">Homo sapiens</name>
    <name type="common">Human</name>
    <dbReference type="NCBI Taxonomy" id="9606"/>
    <lineage>
        <taxon>Eukaryota</taxon>
        <taxon>Metazoa</taxon>
        <taxon>Chordata</taxon>
        <taxon>Craniata</taxon>
        <taxon>Vertebrata</taxon>
        <taxon>Euteleostomi</taxon>
        <taxon>Mammalia</taxon>
        <taxon>Eutheria</taxon>
        <taxon>Euarchontoglires</taxon>
        <taxon>Primates</taxon>
        <taxon>Haplorrhini</taxon>
        <taxon>Catarrhini</taxon>
        <taxon>Hominidae</taxon>
        <taxon>Homo</taxon>
    </lineage>
</organism>
<protein>
    <recommendedName>
        <fullName evidence="3">Small integral membrane protein 41</fullName>
    </recommendedName>
</protein>
<comment type="subcellular location">
    <subcellularLocation>
        <location evidence="1">Membrane</location>
        <topology evidence="1">Single-pass membrane protein</topology>
    </subcellularLocation>
</comment>
<gene>
    <name evidence="3" type="primary">SMIM41</name>
</gene>
<sequence>MNGSQAGAAAQAAWLSSCCNQSASPPEPPEGPRAVQAVVLGVLSLLVLCGVLFLGGGLLLRAQGLTALLTREQRASREPEPGSASGEDGDDDS</sequence>
<feature type="chain" id="PRO_0000446072" description="Small integral membrane protein 41">
    <location>
        <begin position="1"/>
        <end position="93"/>
    </location>
</feature>
<feature type="transmembrane region" description="Helical" evidence="1">
    <location>
        <begin position="38"/>
        <end position="58"/>
    </location>
</feature>
<feature type="region of interest" description="Disordered" evidence="2">
    <location>
        <begin position="71"/>
        <end position="93"/>
    </location>
</feature>
<feature type="compositionally biased region" description="Basic and acidic residues" evidence="2">
    <location>
        <begin position="71"/>
        <end position="80"/>
    </location>
</feature>
<accession>A0A2R8YCJ5</accession>